<dbReference type="EC" id="4.1.1.11" evidence="1"/>
<dbReference type="EMBL" id="CP001393">
    <property type="protein sequence ID" value="ACM61066.1"/>
    <property type="molecule type" value="Genomic_DNA"/>
</dbReference>
<dbReference type="RefSeq" id="WP_015908351.1">
    <property type="nucleotide sequence ID" value="NC_012034.1"/>
</dbReference>
<dbReference type="SMR" id="B9ML76"/>
<dbReference type="STRING" id="521460.Athe_1979"/>
<dbReference type="GeneID" id="31773331"/>
<dbReference type="KEGG" id="ate:Athe_1979"/>
<dbReference type="eggNOG" id="COG0853">
    <property type="taxonomic scope" value="Bacteria"/>
</dbReference>
<dbReference type="HOGENOM" id="CLU_115305_2_0_9"/>
<dbReference type="UniPathway" id="UPA00028">
    <property type="reaction ID" value="UER00002"/>
</dbReference>
<dbReference type="Proteomes" id="UP000007723">
    <property type="component" value="Chromosome"/>
</dbReference>
<dbReference type="GO" id="GO:0005829">
    <property type="term" value="C:cytosol"/>
    <property type="evidence" value="ECO:0007669"/>
    <property type="project" value="TreeGrafter"/>
</dbReference>
<dbReference type="GO" id="GO:0004068">
    <property type="term" value="F:aspartate 1-decarboxylase activity"/>
    <property type="evidence" value="ECO:0007669"/>
    <property type="project" value="UniProtKB-UniRule"/>
</dbReference>
<dbReference type="GO" id="GO:0006523">
    <property type="term" value="P:alanine biosynthetic process"/>
    <property type="evidence" value="ECO:0007669"/>
    <property type="project" value="InterPro"/>
</dbReference>
<dbReference type="GO" id="GO:0015940">
    <property type="term" value="P:pantothenate biosynthetic process"/>
    <property type="evidence" value="ECO:0007669"/>
    <property type="project" value="UniProtKB-UniRule"/>
</dbReference>
<dbReference type="CDD" id="cd06919">
    <property type="entry name" value="Asp_decarbox"/>
    <property type="match status" value="1"/>
</dbReference>
<dbReference type="Gene3D" id="2.40.40.20">
    <property type="match status" value="1"/>
</dbReference>
<dbReference type="HAMAP" id="MF_00446">
    <property type="entry name" value="PanD"/>
    <property type="match status" value="1"/>
</dbReference>
<dbReference type="InterPro" id="IPR009010">
    <property type="entry name" value="Asp_de-COase-like_dom_sf"/>
</dbReference>
<dbReference type="InterPro" id="IPR003190">
    <property type="entry name" value="Asp_decarbox"/>
</dbReference>
<dbReference type="NCBIfam" id="TIGR00223">
    <property type="entry name" value="panD"/>
    <property type="match status" value="1"/>
</dbReference>
<dbReference type="PANTHER" id="PTHR21012">
    <property type="entry name" value="ASPARTATE 1-DECARBOXYLASE"/>
    <property type="match status" value="1"/>
</dbReference>
<dbReference type="PANTHER" id="PTHR21012:SF0">
    <property type="entry name" value="ASPARTATE 1-DECARBOXYLASE"/>
    <property type="match status" value="1"/>
</dbReference>
<dbReference type="Pfam" id="PF02261">
    <property type="entry name" value="Asp_decarbox"/>
    <property type="match status" value="1"/>
</dbReference>
<dbReference type="PIRSF" id="PIRSF006246">
    <property type="entry name" value="Asp_decarbox"/>
    <property type="match status" value="1"/>
</dbReference>
<dbReference type="SUPFAM" id="SSF50692">
    <property type="entry name" value="ADC-like"/>
    <property type="match status" value="1"/>
</dbReference>
<evidence type="ECO:0000255" key="1">
    <source>
        <dbReference type="HAMAP-Rule" id="MF_00446"/>
    </source>
</evidence>
<protein>
    <recommendedName>
        <fullName evidence="1">Aspartate 1-decarboxylase</fullName>
        <ecNumber evidence="1">4.1.1.11</ecNumber>
    </recommendedName>
    <alternativeName>
        <fullName evidence="1">Aspartate alpha-decarboxylase</fullName>
    </alternativeName>
    <component>
        <recommendedName>
            <fullName evidence="1">Aspartate 1-decarboxylase beta chain</fullName>
        </recommendedName>
    </component>
    <component>
        <recommendedName>
            <fullName evidence="1">Aspartate 1-decarboxylase alpha chain</fullName>
        </recommendedName>
    </component>
</protein>
<keyword id="KW-0068">Autocatalytic cleavage</keyword>
<keyword id="KW-0963">Cytoplasm</keyword>
<keyword id="KW-0210">Decarboxylase</keyword>
<keyword id="KW-0456">Lyase</keyword>
<keyword id="KW-0566">Pantothenate biosynthesis</keyword>
<keyword id="KW-0670">Pyruvate</keyword>
<keyword id="KW-0704">Schiff base</keyword>
<keyword id="KW-0865">Zymogen</keyword>
<sequence length="128" mass="14489">MFIEVLKSKIHRATVTEANLNYVGSITIDEELMKAAGIYENEKVQVVNINNGERFETYVIKGEKGSGTICLNGAAARLVQVGDKIIIMAYCLLTMEEYYNHKPRIVFVDDENKIVRLSDKEEHSECIC</sequence>
<comment type="function">
    <text evidence="1">Catalyzes the pyruvoyl-dependent decarboxylation of aspartate to produce beta-alanine.</text>
</comment>
<comment type="catalytic activity">
    <reaction evidence="1">
        <text>L-aspartate + H(+) = beta-alanine + CO2</text>
        <dbReference type="Rhea" id="RHEA:19497"/>
        <dbReference type="ChEBI" id="CHEBI:15378"/>
        <dbReference type="ChEBI" id="CHEBI:16526"/>
        <dbReference type="ChEBI" id="CHEBI:29991"/>
        <dbReference type="ChEBI" id="CHEBI:57966"/>
        <dbReference type="EC" id="4.1.1.11"/>
    </reaction>
</comment>
<comment type="cofactor">
    <cofactor evidence="1">
        <name>pyruvate</name>
        <dbReference type="ChEBI" id="CHEBI:15361"/>
    </cofactor>
    <text evidence="1">Binds 1 pyruvoyl group covalently per subunit.</text>
</comment>
<comment type="pathway">
    <text evidence="1">Cofactor biosynthesis; (R)-pantothenate biosynthesis; beta-alanine from L-aspartate: step 1/1.</text>
</comment>
<comment type="subunit">
    <text evidence="1">Heterooctamer of four alpha and four beta subunits.</text>
</comment>
<comment type="subcellular location">
    <subcellularLocation>
        <location evidence="1">Cytoplasm</location>
    </subcellularLocation>
</comment>
<comment type="PTM">
    <text evidence="1">Is synthesized initially as an inactive proenzyme, which is activated by self-cleavage at a specific serine bond to produce a beta-subunit with a hydroxyl group at its C-terminus and an alpha-subunit with a pyruvoyl group at its N-terminus.</text>
</comment>
<comment type="similarity">
    <text evidence="1">Belongs to the PanD family.</text>
</comment>
<reference key="1">
    <citation type="submission" date="2009-01" db="EMBL/GenBank/DDBJ databases">
        <title>Complete sequence of chromosome of Caldicellulosiruptor becscii DSM 6725.</title>
        <authorList>
            <person name="Lucas S."/>
            <person name="Copeland A."/>
            <person name="Lapidus A."/>
            <person name="Glavina del Rio T."/>
            <person name="Tice H."/>
            <person name="Bruce D."/>
            <person name="Goodwin L."/>
            <person name="Pitluck S."/>
            <person name="Sims D."/>
            <person name="Meincke L."/>
            <person name="Brettin T."/>
            <person name="Detter J.C."/>
            <person name="Han C."/>
            <person name="Larimer F."/>
            <person name="Land M."/>
            <person name="Hauser L."/>
            <person name="Kyrpides N."/>
            <person name="Ovchinnikova G."/>
            <person name="Kataeva I."/>
            <person name="Adams M.W.W."/>
        </authorList>
    </citation>
    <scope>NUCLEOTIDE SEQUENCE [LARGE SCALE GENOMIC DNA]</scope>
    <source>
        <strain>ATCC BAA-1888 / DSM 6725 / KCTC 15123 / Z-1320</strain>
    </source>
</reference>
<gene>
    <name evidence="1" type="primary">panD</name>
    <name type="ordered locus">Athe_1979</name>
</gene>
<proteinExistence type="inferred from homology"/>
<organism>
    <name type="scientific">Caldicellulosiruptor bescii (strain ATCC BAA-1888 / DSM 6725 / KCTC 15123 / Z-1320)</name>
    <name type="common">Anaerocellum thermophilum</name>
    <dbReference type="NCBI Taxonomy" id="521460"/>
    <lineage>
        <taxon>Bacteria</taxon>
        <taxon>Bacillati</taxon>
        <taxon>Bacillota</taxon>
        <taxon>Bacillota incertae sedis</taxon>
        <taxon>Caldicellulosiruptorales</taxon>
        <taxon>Caldicellulosiruptoraceae</taxon>
        <taxon>Caldicellulosiruptor</taxon>
    </lineage>
</organism>
<feature type="chain" id="PRO_1000191918" description="Aspartate 1-decarboxylase beta chain" evidence="1">
    <location>
        <begin position="1"/>
        <end position="24"/>
    </location>
</feature>
<feature type="chain" id="PRO_1000191919" description="Aspartate 1-decarboxylase alpha chain" evidence="1">
    <location>
        <begin position="25"/>
        <end position="128"/>
    </location>
</feature>
<feature type="active site" description="Schiff-base intermediate with substrate; via pyruvic acid" evidence="1">
    <location>
        <position position="25"/>
    </location>
</feature>
<feature type="active site" description="Proton donor" evidence="1">
    <location>
        <position position="58"/>
    </location>
</feature>
<feature type="binding site" evidence="1">
    <location>
        <position position="57"/>
    </location>
    <ligand>
        <name>substrate</name>
    </ligand>
</feature>
<feature type="binding site" evidence="1">
    <location>
        <begin position="73"/>
        <end position="75"/>
    </location>
    <ligand>
        <name>substrate</name>
    </ligand>
</feature>
<feature type="modified residue" description="Pyruvic acid (Ser)" evidence="1">
    <location>
        <position position="25"/>
    </location>
</feature>
<accession>B9ML76</accession>
<name>PAND_CALBD</name>